<organism>
    <name type="scientific">Caulobacter vibrioides (strain ATCC 19089 / CIP 103742 / CB 15)</name>
    <name type="common">Caulobacter crescentus</name>
    <dbReference type="NCBI Taxonomy" id="190650"/>
    <lineage>
        <taxon>Bacteria</taxon>
        <taxon>Pseudomonadati</taxon>
        <taxon>Pseudomonadota</taxon>
        <taxon>Alphaproteobacteria</taxon>
        <taxon>Caulobacterales</taxon>
        <taxon>Caulobacteraceae</taxon>
        <taxon>Caulobacter</taxon>
    </lineage>
</organism>
<proteinExistence type="inferred from homology"/>
<sequence>MAEAKTVTVRQTGSPIRREKDQRATLVGLGLNRVGRVSTLQDNPSTRGMIRKVQHLLEIVE</sequence>
<dbReference type="EMBL" id="AE005673">
    <property type="protein sequence ID" value="AAK23247.1"/>
    <property type="molecule type" value="Genomic_DNA"/>
</dbReference>
<dbReference type="PIR" id="C87406">
    <property type="entry name" value="C87406"/>
</dbReference>
<dbReference type="RefSeq" id="NP_420079.1">
    <property type="nucleotide sequence ID" value="NC_002696.2"/>
</dbReference>
<dbReference type="RefSeq" id="WP_010919145.1">
    <property type="nucleotide sequence ID" value="NC_002696.2"/>
</dbReference>
<dbReference type="SMR" id="Q9A8T5"/>
<dbReference type="STRING" id="190650.CC_1266"/>
<dbReference type="EnsemblBacteria" id="AAK23247">
    <property type="protein sequence ID" value="AAK23247"/>
    <property type="gene ID" value="CC_1266"/>
</dbReference>
<dbReference type="KEGG" id="ccr:CC_1266"/>
<dbReference type="PATRIC" id="fig|190650.5.peg.1291"/>
<dbReference type="eggNOG" id="COG1841">
    <property type="taxonomic scope" value="Bacteria"/>
</dbReference>
<dbReference type="HOGENOM" id="CLU_131047_1_2_5"/>
<dbReference type="BioCyc" id="CAULO:CC1266-MONOMER"/>
<dbReference type="Proteomes" id="UP000001816">
    <property type="component" value="Chromosome"/>
</dbReference>
<dbReference type="GO" id="GO:0015934">
    <property type="term" value="C:large ribosomal subunit"/>
    <property type="evidence" value="ECO:0007669"/>
    <property type="project" value="InterPro"/>
</dbReference>
<dbReference type="GO" id="GO:0003735">
    <property type="term" value="F:structural constituent of ribosome"/>
    <property type="evidence" value="ECO:0007669"/>
    <property type="project" value="InterPro"/>
</dbReference>
<dbReference type="GO" id="GO:0006412">
    <property type="term" value="P:translation"/>
    <property type="evidence" value="ECO:0007669"/>
    <property type="project" value="UniProtKB-UniRule"/>
</dbReference>
<dbReference type="CDD" id="cd01658">
    <property type="entry name" value="Ribosomal_L30"/>
    <property type="match status" value="1"/>
</dbReference>
<dbReference type="Gene3D" id="3.30.1390.20">
    <property type="entry name" value="Ribosomal protein L30, ferredoxin-like fold domain"/>
    <property type="match status" value="1"/>
</dbReference>
<dbReference type="HAMAP" id="MF_01371_B">
    <property type="entry name" value="Ribosomal_uL30_B"/>
    <property type="match status" value="1"/>
</dbReference>
<dbReference type="InterPro" id="IPR036919">
    <property type="entry name" value="Ribo_uL30_ferredoxin-like_sf"/>
</dbReference>
<dbReference type="InterPro" id="IPR005996">
    <property type="entry name" value="Ribosomal_uL30_bac-type"/>
</dbReference>
<dbReference type="InterPro" id="IPR016082">
    <property type="entry name" value="Ribosomal_uL30_ferredoxin-like"/>
</dbReference>
<dbReference type="NCBIfam" id="TIGR01308">
    <property type="entry name" value="rpmD_bact"/>
    <property type="match status" value="1"/>
</dbReference>
<dbReference type="Pfam" id="PF00327">
    <property type="entry name" value="Ribosomal_L30"/>
    <property type="match status" value="1"/>
</dbReference>
<dbReference type="PIRSF" id="PIRSF002211">
    <property type="entry name" value="Ribosomal_L30_bac-type"/>
    <property type="match status" value="1"/>
</dbReference>
<dbReference type="SUPFAM" id="SSF55129">
    <property type="entry name" value="Ribosomal protein L30p/L7e"/>
    <property type="match status" value="1"/>
</dbReference>
<accession>Q9A8T5</accession>
<keyword id="KW-1185">Reference proteome</keyword>
<keyword id="KW-0687">Ribonucleoprotein</keyword>
<keyword id="KW-0689">Ribosomal protein</keyword>
<name>RL30_CAUVC</name>
<protein>
    <recommendedName>
        <fullName evidence="1">Large ribosomal subunit protein uL30</fullName>
    </recommendedName>
    <alternativeName>
        <fullName evidence="2">50S ribosomal protein L30</fullName>
    </alternativeName>
</protein>
<gene>
    <name evidence="1" type="primary">rpmD</name>
    <name type="ordered locus">CC_1266</name>
</gene>
<comment type="subunit">
    <text evidence="1">Part of the 50S ribosomal subunit.</text>
</comment>
<comment type="similarity">
    <text evidence="1">Belongs to the universal ribosomal protein uL30 family.</text>
</comment>
<reference key="1">
    <citation type="journal article" date="2001" name="Proc. Natl. Acad. Sci. U.S.A.">
        <title>Complete genome sequence of Caulobacter crescentus.</title>
        <authorList>
            <person name="Nierman W.C."/>
            <person name="Feldblyum T.V."/>
            <person name="Laub M.T."/>
            <person name="Paulsen I.T."/>
            <person name="Nelson K.E."/>
            <person name="Eisen J.A."/>
            <person name="Heidelberg J.F."/>
            <person name="Alley M.R.K."/>
            <person name="Ohta N."/>
            <person name="Maddock J.R."/>
            <person name="Potocka I."/>
            <person name="Nelson W.C."/>
            <person name="Newton A."/>
            <person name="Stephens C."/>
            <person name="Phadke N.D."/>
            <person name="Ely B."/>
            <person name="DeBoy R.T."/>
            <person name="Dodson R.J."/>
            <person name="Durkin A.S."/>
            <person name="Gwinn M.L."/>
            <person name="Haft D.H."/>
            <person name="Kolonay J.F."/>
            <person name="Smit J."/>
            <person name="Craven M.B."/>
            <person name="Khouri H.M."/>
            <person name="Shetty J."/>
            <person name="Berry K.J."/>
            <person name="Utterback T.R."/>
            <person name="Tran K."/>
            <person name="Wolf A.M."/>
            <person name="Vamathevan J.J."/>
            <person name="Ermolaeva M.D."/>
            <person name="White O."/>
            <person name="Salzberg S.L."/>
            <person name="Venter J.C."/>
            <person name="Shapiro L."/>
            <person name="Fraser C.M."/>
        </authorList>
    </citation>
    <scope>NUCLEOTIDE SEQUENCE [LARGE SCALE GENOMIC DNA]</scope>
    <source>
        <strain>ATCC 19089 / CIP 103742 / CB 15</strain>
    </source>
</reference>
<evidence type="ECO:0000255" key="1">
    <source>
        <dbReference type="HAMAP-Rule" id="MF_01371"/>
    </source>
</evidence>
<evidence type="ECO:0000305" key="2"/>
<feature type="chain" id="PRO_0000347090" description="Large ribosomal subunit protein uL30">
    <location>
        <begin position="1"/>
        <end position="61"/>
    </location>
</feature>